<dbReference type="EMBL" id="X05062">
    <property type="protein sequence ID" value="CAA28729.1"/>
    <property type="molecule type" value="Genomic_DNA"/>
</dbReference>
<dbReference type="EMBL" id="M22259">
    <property type="protein sequence ID" value="AAA34866.1"/>
    <property type="molecule type" value="Genomic_DNA"/>
</dbReference>
<dbReference type="EMBL" id="X95644">
    <property type="protein sequence ID" value="CAA64906.1"/>
    <property type="molecule type" value="Genomic_DNA"/>
</dbReference>
<dbReference type="EMBL" id="Z74154">
    <property type="protein sequence ID" value="CAA98673.1"/>
    <property type="molecule type" value="Genomic_DNA"/>
</dbReference>
<dbReference type="EMBL" id="BK006938">
    <property type="protein sequence ID" value="DAA11754.1"/>
    <property type="molecule type" value="Genomic_DNA"/>
</dbReference>
<dbReference type="PIR" id="A25872">
    <property type="entry name" value="A25872"/>
</dbReference>
<dbReference type="RefSeq" id="NP_010177.1">
    <property type="nucleotide sequence ID" value="NM_001180165.1"/>
</dbReference>
<dbReference type="SMR" id="P07269"/>
<dbReference type="BioGRID" id="31956">
    <property type="interactions" value="187"/>
</dbReference>
<dbReference type="DIP" id="DIP-13N"/>
<dbReference type="FunCoup" id="P07269">
    <property type="interactions" value="1306"/>
</dbReference>
<dbReference type="IntAct" id="P07269">
    <property type="interactions" value="19"/>
</dbReference>
<dbReference type="STRING" id="4932.YDL106C"/>
<dbReference type="GlyGen" id="P07269">
    <property type="glycosylation" value="1 site"/>
</dbReference>
<dbReference type="iPTMnet" id="P07269"/>
<dbReference type="PaxDb" id="4932-YDL106C"/>
<dbReference type="PeptideAtlas" id="P07269"/>
<dbReference type="EnsemblFungi" id="YDL106C_mRNA">
    <property type="protein sequence ID" value="YDL106C"/>
    <property type="gene ID" value="YDL106C"/>
</dbReference>
<dbReference type="GeneID" id="851452"/>
<dbReference type="KEGG" id="sce:YDL106C"/>
<dbReference type="AGR" id="SGD:S000002264"/>
<dbReference type="SGD" id="S000002264">
    <property type="gene designation" value="PHO2"/>
</dbReference>
<dbReference type="VEuPathDB" id="FungiDB:YDL106C"/>
<dbReference type="eggNOG" id="KOG0486">
    <property type="taxonomic scope" value="Eukaryota"/>
</dbReference>
<dbReference type="HOGENOM" id="CLU_028430_2_0_1"/>
<dbReference type="InParanoid" id="P07269"/>
<dbReference type="OMA" id="NHNANNE"/>
<dbReference type="OrthoDB" id="6159439at2759"/>
<dbReference type="BioCyc" id="YEAST:G3O-29507-MONOMER"/>
<dbReference type="BioGRID-ORCS" id="851452">
    <property type="hits" value="1 hit in 13 CRISPR screens"/>
</dbReference>
<dbReference type="PRO" id="PR:P07269"/>
<dbReference type="Proteomes" id="UP000002311">
    <property type="component" value="Chromosome IV"/>
</dbReference>
<dbReference type="RNAct" id="P07269">
    <property type="molecule type" value="protein"/>
</dbReference>
<dbReference type="GO" id="GO:0005829">
    <property type="term" value="C:cytosol"/>
    <property type="evidence" value="ECO:0000314"/>
    <property type="project" value="SGD"/>
</dbReference>
<dbReference type="GO" id="GO:0005634">
    <property type="term" value="C:nucleus"/>
    <property type="evidence" value="ECO:0000314"/>
    <property type="project" value="SGD"/>
</dbReference>
<dbReference type="GO" id="GO:0001228">
    <property type="term" value="F:DNA-binding transcription activator activity, RNA polymerase II-specific"/>
    <property type="evidence" value="ECO:0000314"/>
    <property type="project" value="SGD"/>
</dbReference>
<dbReference type="GO" id="GO:0000978">
    <property type="term" value="F:RNA polymerase II cis-regulatory region sequence-specific DNA binding"/>
    <property type="evidence" value="ECO:0000314"/>
    <property type="project" value="SGD"/>
</dbReference>
<dbReference type="GO" id="GO:0043565">
    <property type="term" value="F:sequence-specific DNA binding"/>
    <property type="evidence" value="ECO:0007005"/>
    <property type="project" value="SGD"/>
</dbReference>
<dbReference type="GO" id="GO:0030154">
    <property type="term" value="P:cell differentiation"/>
    <property type="evidence" value="ECO:0000318"/>
    <property type="project" value="GO_Central"/>
</dbReference>
<dbReference type="GO" id="GO:0006338">
    <property type="term" value="P:chromatin remodeling"/>
    <property type="evidence" value="ECO:0000315"/>
    <property type="project" value="SGD"/>
</dbReference>
<dbReference type="GO" id="GO:0045937">
    <property type="term" value="P:positive regulation of phosphate metabolic process"/>
    <property type="evidence" value="ECO:0000316"/>
    <property type="project" value="SGD"/>
</dbReference>
<dbReference type="GO" id="GO:0045944">
    <property type="term" value="P:positive regulation of transcription by RNA polymerase II"/>
    <property type="evidence" value="ECO:0000315"/>
    <property type="project" value="SGD"/>
</dbReference>
<dbReference type="GO" id="GO:0120213">
    <property type="term" value="P:regulation of histidine biosynthetic process"/>
    <property type="evidence" value="ECO:0000315"/>
    <property type="project" value="SGD"/>
</dbReference>
<dbReference type="GO" id="GO:0006141">
    <property type="term" value="P:regulation of purine nucleobase metabolic process"/>
    <property type="evidence" value="ECO:0000314"/>
    <property type="project" value="SGD"/>
</dbReference>
<dbReference type="GO" id="GO:0006357">
    <property type="term" value="P:regulation of transcription by RNA polymerase II"/>
    <property type="evidence" value="ECO:0000318"/>
    <property type="project" value="GO_Central"/>
</dbReference>
<dbReference type="CDD" id="cd00086">
    <property type="entry name" value="homeodomain"/>
    <property type="match status" value="1"/>
</dbReference>
<dbReference type="FunFam" id="1.10.10.60:FF:000519">
    <property type="entry name" value="Homeobox transcription factor"/>
    <property type="match status" value="1"/>
</dbReference>
<dbReference type="Gene3D" id="1.10.10.60">
    <property type="entry name" value="Homeodomain-like"/>
    <property type="match status" value="1"/>
</dbReference>
<dbReference type="InterPro" id="IPR001356">
    <property type="entry name" value="HD"/>
</dbReference>
<dbReference type="InterPro" id="IPR017970">
    <property type="entry name" value="Homeobox_CS"/>
</dbReference>
<dbReference type="InterPro" id="IPR051000">
    <property type="entry name" value="Homeobox_DNA-bind_prot"/>
</dbReference>
<dbReference type="InterPro" id="IPR009057">
    <property type="entry name" value="Homeodomain-like_sf"/>
</dbReference>
<dbReference type="PANTHER" id="PTHR24324:SF5">
    <property type="entry name" value="HEMATOPOIETICALLY-EXPRESSED HOMEOBOX PROTEIN HHEX"/>
    <property type="match status" value="1"/>
</dbReference>
<dbReference type="PANTHER" id="PTHR24324">
    <property type="entry name" value="HOMEOBOX PROTEIN HHEX"/>
    <property type="match status" value="1"/>
</dbReference>
<dbReference type="Pfam" id="PF00046">
    <property type="entry name" value="Homeodomain"/>
    <property type="match status" value="1"/>
</dbReference>
<dbReference type="SMART" id="SM00389">
    <property type="entry name" value="HOX"/>
    <property type="match status" value="1"/>
</dbReference>
<dbReference type="SUPFAM" id="SSF81995">
    <property type="entry name" value="beta-sandwich domain of Sec23/24"/>
    <property type="match status" value="1"/>
</dbReference>
<dbReference type="SUPFAM" id="SSF46689">
    <property type="entry name" value="Homeodomain-like"/>
    <property type="match status" value="1"/>
</dbReference>
<dbReference type="PROSITE" id="PS00027">
    <property type="entry name" value="HOMEOBOX_1"/>
    <property type="match status" value="1"/>
</dbReference>
<dbReference type="PROSITE" id="PS50071">
    <property type="entry name" value="HOMEOBOX_2"/>
    <property type="match status" value="1"/>
</dbReference>
<comment type="function">
    <text evidence="4">Regulator in phosphate metabolism and acts as a derepressor of another central regulator PHO5. Binds to the upstream activator sequence (UAS) of PHO5. It also binds to the TRP4, HIS4, and CYC1 promoters.</text>
</comment>
<comment type="subcellular location">
    <subcellularLocation>
        <location>Nucleus</location>
    </subcellularLocation>
</comment>
<comment type="miscellaneous">
    <text evidence="3">Present with 6420 molecules/cell in log phase SD medium.</text>
</comment>
<sequence>MMEEFSYDHDFNTHFATDLDYLQHDQQQQQQQQHDQQHNQQQQPQPQPIQTQNLEHDHDQHTNDMSASSNASDSGPQRPKRTRAKGEALDVLKRKFEINPTPSLVERKKISDLIGMPEKNVRIWFQNRRAKLRKKQHGSNKDTIPSSQSRDIANDYDRGSTDNNLVTTTSTSSIFHDEDLTFFDRIPLNSNNNYYFFDICSITVGSWNRMKSGALQRRNFQSIKELRNLSPIKINNIMSNATDLMVLISKKNSEINYFFSAMANNTKILFRIFFPLSSVTNCSLTLETDDDIINSNNTSDKNNSNTNNDDDNDDNSNEDNDNSSEDKRNAKDNFGELKLTVTRSPTFAVYFLNNAPDEDPNLNNQWSICDDFSEGRQVNDAFVGGSNIPHTLKGLQKSLRFMNSLILDYKSSNEILPTINTAIPTAAVPQQNIAPPFLNTNSSATDSNPNTNLEDSLFFDHDLLSSSITNTNNGQGSNNGRQASKDDTLNLLDTTVNSNNNHNANNEENHLAQEHLSNDADIVANPNDHLLSLPTDSELPNTPDFLKNTNELTDEHRWI</sequence>
<evidence type="ECO:0000255" key="1">
    <source>
        <dbReference type="PROSITE-ProRule" id="PRU00108"/>
    </source>
</evidence>
<evidence type="ECO:0000256" key="2">
    <source>
        <dbReference type="SAM" id="MobiDB-lite"/>
    </source>
</evidence>
<evidence type="ECO:0000269" key="3">
    <source>
    </source>
</evidence>
<evidence type="ECO:0000269" key="4">
    <source>
    </source>
</evidence>
<evidence type="ECO:0007744" key="5">
    <source>
    </source>
</evidence>
<protein>
    <recommendedName>
        <fullName>Regulatory protein PHO2</fullName>
    </recommendedName>
    <alternativeName>
        <fullName>General regulatory factor 10</fullName>
    </alternativeName>
</protein>
<proteinExistence type="evidence at protein level"/>
<reference key="1">
    <citation type="journal article" date="1987" name="Nucleic Acids Res.">
        <title>The sequence of the Saccharomyces cerevisiae gene PHO2 codes for a regulatory protein with unusual aminoacid composition.</title>
        <authorList>
            <person name="Sengstag C."/>
            <person name="Hinnen A."/>
        </authorList>
    </citation>
    <scope>NUCLEOTIDE SEQUENCE [GENOMIC DNA]</scope>
</reference>
<reference key="2">
    <citation type="submission" date="1989-01" db="EMBL/GenBank/DDBJ databases">
        <authorList>
            <person name="Berben G."/>
        </authorList>
    </citation>
    <scope>NUCLEOTIDE SEQUENCE [GENOMIC DNA]</scope>
</reference>
<reference key="3">
    <citation type="journal article" date="1996" name="Yeast">
        <title>The sequence of a 20.3 kb DNA fragment from the left arm of Saccharomyces cerevisiae chromosome IV contains the KIN28, MSS2, PHO2, POL3 and DUN1 genes, and six new open reading frames.</title>
        <authorList>
            <person name="Saiz J.E."/>
            <person name="Buitrago M.J."/>
            <person name="Garcia R."/>
            <person name="Revuelta J.L."/>
            <person name="del Rey F."/>
        </authorList>
    </citation>
    <scope>NUCLEOTIDE SEQUENCE [GENOMIC DNA]</scope>
    <source>
        <strain>ATCC 96604 / S288c / FY1679</strain>
    </source>
</reference>
<reference key="4">
    <citation type="journal article" date="1997" name="Nature">
        <title>The nucleotide sequence of Saccharomyces cerevisiae chromosome IV.</title>
        <authorList>
            <person name="Jacq C."/>
            <person name="Alt-Moerbe J."/>
            <person name="Andre B."/>
            <person name="Arnold W."/>
            <person name="Bahr A."/>
            <person name="Ballesta J.P.G."/>
            <person name="Bargues M."/>
            <person name="Baron L."/>
            <person name="Becker A."/>
            <person name="Biteau N."/>
            <person name="Bloecker H."/>
            <person name="Blugeon C."/>
            <person name="Boskovic J."/>
            <person name="Brandt P."/>
            <person name="Brueckner M."/>
            <person name="Buitrago M.J."/>
            <person name="Coster F."/>
            <person name="Delaveau T."/>
            <person name="del Rey F."/>
            <person name="Dujon B."/>
            <person name="Eide L.G."/>
            <person name="Garcia-Cantalejo J.M."/>
            <person name="Goffeau A."/>
            <person name="Gomez-Peris A."/>
            <person name="Granotier C."/>
            <person name="Hanemann V."/>
            <person name="Hankeln T."/>
            <person name="Hoheisel J.D."/>
            <person name="Jaeger W."/>
            <person name="Jimenez A."/>
            <person name="Jonniaux J.-L."/>
            <person name="Kraemer C."/>
            <person name="Kuester H."/>
            <person name="Laamanen P."/>
            <person name="Legros Y."/>
            <person name="Louis E.J."/>
            <person name="Moeller-Rieker S."/>
            <person name="Monnet A."/>
            <person name="Moro M."/>
            <person name="Mueller-Auer S."/>
            <person name="Nussbaumer B."/>
            <person name="Paricio N."/>
            <person name="Paulin L."/>
            <person name="Perea J."/>
            <person name="Perez-Alonso M."/>
            <person name="Perez-Ortin J.E."/>
            <person name="Pohl T.M."/>
            <person name="Prydz H."/>
            <person name="Purnelle B."/>
            <person name="Rasmussen S.W."/>
            <person name="Remacha M.A."/>
            <person name="Revuelta J.L."/>
            <person name="Rieger M."/>
            <person name="Salom D."/>
            <person name="Saluz H.P."/>
            <person name="Saiz J.E."/>
            <person name="Saren A.-M."/>
            <person name="Schaefer M."/>
            <person name="Scharfe M."/>
            <person name="Schmidt E.R."/>
            <person name="Schneider C."/>
            <person name="Scholler P."/>
            <person name="Schwarz S."/>
            <person name="Soler-Mira A."/>
            <person name="Urrestarazu L.A."/>
            <person name="Verhasselt P."/>
            <person name="Vissers S."/>
            <person name="Voet M."/>
            <person name="Volckaert G."/>
            <person name="Wagner G."/>
            <person name="Wambutt R."/>
            <person name="Wedler E."/>
            <person name="Wedler H."/>
            <person name="Woelfl S."/>
            <person name="Harris D.E."/>
            <person name="Bowman S."/>
            <person name="Brown D."/>
            <person name="Churcher C.M."/>
            <person name="Connor R."/>
            <person name="Dedman K."/>
            <person name="Gentles S."/>
            <person name="Hamlin N."/>
            <person name="Hunt S."/>
            <person name="Jones L."/>
            <person name="McDonald S."/>
            <person name="Murphy L.D."/>
            <person name="Niblett D."/>
            <person name="Odell C."/>
            <person name="Oliver K."/>
            <person name="Rajandream M.A."/>
            <person name="Richards C."/>
            <person name="Shore L."/>
            <person name="Walsh S.V."/>
            <person name="Barrell B.G."/>
            <person name="Dietrich F.S."/>
            <person name="Mulligan J.T."/>
            <person name="Allen E."/>
            <person name="Araujo R."/>
            <person name="Aviles E."/>
            <person name="Berno A."/>
            <person name="Carpenter J."/>
            <person name="Chen E."/>
            <person name="Cherry J.M."/>
            <person name="Chung E."/>
            <person name="Duncan M."/>
            <person name="Hunicke-Smith S."/>
            <person name="Hyman R.W."/>
            <person name="Komp C."/>
            <person name="Lashkari D."/>
            <person name="Lew H."/>
            <person name="Lin D."/>
            <person name="Mosedale D."/>
            <person name="Nakahara K."/>
            <person name="Namath A."/>
            <person name="Oefner P."/>
            <person name="Oh C."/>
            <person name="Petel F.X."/>
            <person name="Roberts D."/>
            <person name="Schramm S."/>
            <person name="Schroeder M."/>
            <person name="Shogren T."/>
            <person name="Shroff N."/>
            <person name="Winant A."/>
            <person name="Yelton M.A."/>
            <person name="Botstein D."/>
            <person name="Davis R.W."/>
            <person name="Johnston M."/>
            <person name="Andrews S."/>
            <person name="Brinkman R."/>
            <person name="Cooper J."/>
            <person name="Ding H."/>
            <person name="Du Z."/>
            <person name="Favello A."/>
            <person name="Fulton L."/>
            <person name="Gattung S."/>
            <person name="Greco T."/>
            <person name="Hallsworth K."/>
            <person name="Hawkins J."/>
            <person name="Hillier L.W."/>
            <person name="Jier M."/>
            <person name="Johnson D."/>
            <person name="Johnston L."/>
            <person name="Kirsten J."/>
            <person name="Kucaba T."/>
            <person name="Langston Y."/>
            <person name="Latreille P."/>
            <person name="Le T."/>
            <person name="Mardis E."/>
            <person name="Menezes S."/>
            <person name="Miller N."/>
            <person name="Nhan M."/>
            <person name="Pauley A."/>
            <person name="Peluso D."/>
            <person name="Rifkin L."/>
            <person name="Riles L."/>
            <person name="Taich A."/>
            <person name="Trevaskis E."/>
            <person name="Vignati D."/>
            <person name="Wilcox L."/>
            <person name="Wohldman P."/>
            <person name="Vaudin M."/>
            <person name="Wilson R."/>
            <person name="Waterston R."/>
            <person name="Albermann K."/>
            <person name="Hani J."/>
            <person name="Heumann K."/>
            <person name="Kleine K."/>
            <person name="Mewes H.-W."/>
            <person name="Zollner A."/>
            <person name="Zaccaria P."/>
        </authorList>
    </citation>
    <scope>NUCLEOTIDE SEQUENCE [LARGE SCALE GENOMIC DNA]</scope>
    <source>
        <strain>ATCC 204508 / S288c</strain>
    </source>
</reference>
<reference key="5">
    <citation type="journal article" date="2014" name="G3 (Bethesda)">
        <title>The reference genome sequence of Saccharomyces cerevisiae: Then and now.</title>
        <authorList>
            <person name="Engel S.R."/>
            <person name="Dietrich F.S."/>
            <person name="Fisk D.G."/>
            <person name="Binkley G."/>
            <person name="Balakrishnan R."/>
            <person name="Costanzo M.C."/>
            <person name="Dwight S.S."/>
            <person name="Hitz B.C."/>
            <person name="Karra K."/>
            <person name="Nash R.S."/>
            <person name="Weng S."/>
            <person name="Wong E.D."/>
            <person name="Lloyd P."/>
            <person name="Skrzypek M.S."/>
            <person name="Miyasato S.R."/>
            <person name="Simison M."/>
            <person name="Cherry J.M."/>
        </authorList>
    </citation>
    <scope>GENOME REANNOTATION</scope>
    <source>
        <strain>ATCC 204508 / S288c</strain>
    </source>
</reference>
<reference key="6">
    <citation type="journal article" date="1988" name="Gene">
        <title>Studies on the structure, expression and function of the yeast regulatory gene PHO2.</title>
        <authorList>
            <person name="Berben G."/>
            <person name="Legrain M."/>
            <person name="Hilger F."/>
        </authorList>
    </citation>
    <scope>STRUCTURE</scope>
    <scope>EXPRESSION</scope>
    <scope>FUNCTION</scope>
</reference>
<reference key="7">
    <citation type="journal article" date="1988" name="Cell">
        <title>The yeast regulatory gene PHO2 encodes a homeo box.</title>
        <authorList>
            <person name="Buerglin T.R."/>
        </authorList>
    </citation>
    <scope>DOMAIN HOMEOBOX</scope>
</reference>
<reference key="8">
    <citation type="journal article" date="2003" name="Nature">
        <title>Global analysis of protein expression in yeast.</title>
        <authorList>
            <person name="Ghaemmaghami S."/>
            <person name="Huh W.-K."/>
            <person name="Bower K."/>
            <person name="Howson R.W."/>
            <person name="Belle A."/>
            <person name="Dephoure N."/>
            <person name="O'Shea E.K."/>
            <person name="Weissman J.S."/>
        </authorList>
    </citation>
    <scope>LEVEL OF PROTEIN EXPRESSION [LARGE SCALE ANALYSIS]</scope>
</reference>
<reference key="9">
    <citation type="journal article" date="2008" name="Mol. Cell. Proteomics">
        <title>A multidimensional chromatography technology for in-depth phosphoproteome analysis.</title>
        <authorList>
            <person name="Albuquerque C.P."/>
            <person name="Smolka M.B."/>
            <person name="Payne S.H."/>
            <person name="Bafna V."/>
            <person name="Eng J."/>
            <person name="Zhou H."/>
        </authorList>
    </citation>
    <scope>PHOSPHORYLATION [LARGE SCALE ANALYSIS] AT THR-542</scope>
    <scope>IDENTIFICATION BY MASS SPECTROMETRY [LARGE SCALE ANALYSIS]</scope>
</reference>
<name>PHO2_YEAST</name>
<gene>
    <name type="primary">PHO2</name>
    <name type="synonym">BAS2</name>
    <name type="synonym">GRF10</name>
    <name type="ordered locus">YDL106C</name>
    <name type="ORF">D2350</name>
</gene>
<keyword id="KW-0238">DNA-binding</keyword>
<keyword id="KW-0371">Homeobox</keyword>
<keyword id="KW-0539">Nucleus</keyword>
<keyword id="KW-0597">Phosphoprotein</keyword>
<keyword id="KW-1185">Reference proteome</keyword>
<keyword id="KW-0804">Transcription</keyword>
<keyword id="KW-0805">Transcription regulation</keyword>
<organism>
    <name type="scientific">Saccharomyces cerevisiae (strain ATCC 204508 / S288c)</name>
    <name type="common">Baker's yeast</name>
    <dbReference type="NCBI Taxonomy" id="559292"/>
    <lineage>
        <taxon>Eukaryota</taxon>
        <taxon>Fungi</taxon>
        <taxon>Dikarya</taxon>
        <taxon>Ascomycota</taxon>
        <taxon>Saccharomycotina</taxon>
        <taxon>Saccharomycetes</taxon>
        <taxon>Saccharomycetales</taxon>
        <taxon>Saccharomycetaceae</taxon>
        <taxon>Saccharomyces</taxon>
    </lineage>
</organism>
<feature type="chain" id="PRO_0000049247" description="Regulatory protein PHO2">
    <location>
        <begin position="1"/>
        <end position="559"/>
    </location>
</feature>
<feature type="DNA-binding region" description="Homeobox" evidence="1">
    <location>
        <begin position="77"/>
        <end position="136"/>
    </location>
</feature>
<feature type="region of interest" description="Disordered" evidence="2">
    <location>
        <begin position="16"/>
        <end position="88"/>
    </location>
</feature>
<feature type="region of interest" description="Disordered" evidence="2">
    <location>
        <begin position="132"/>
        <end position="158"/>
    </location>
</feature>
<feature type="region of interest" description="Disordered" evidence="2">
    <location>
        <begin position="293"/>
        <end position="333"/>
    </location>
</feature>
<feature type="region of interest" description="Disordered" evidence="2">
    <location>
        <begin position="534"/>
        <end position="559"/>
    </location>
</feature>
<feature type="compositionally biased region" description="Low complexity" evidence="2">
    <location>
        <begin position="24"/>
        <end position="52"/>
    </location>
</feature>
<feature type="compositionally biased region" description="Low complexity" evidence="2">
    <location>
        <begin position="63"/>
        <end position="74"/>
    </location>
</feature>
<feature type="compositionally biased region" description="Polar residues" evidence="2">
    <location>
        <begin position="141"/>
        <end position="151"/>
    </location>
</feature>
<feature type="compositionally biased region" description="Low complexity" evidence="2">
    <location>
        <begin position="293"/>
        <end position="307"/>
    </location>
</feature>
<feature type="compositionally biased region" description="Acidic residues" evidence="2">
    <location>
        <begin position="308"/>
        <end position="323"/>
    </location>
</feature>
<feature type="compositionally biased region" description="Basic and acidic residues" evidence="2">
    <location>
        <begin position="324"/>
        <end position="333"/>
    </location>
</feature>
<feature type="modified residue" description="Phosphothreonine" evidence="5">
    <location>
        <position position="542"/>
    </location>
</feature>
<accession>P07269</accession>
<accession>D6VRP4</accession>